<protein>
    <recommendedName>
        <fullName evidence="3">Alpha-toxin Cn12</fullName>
    </recommendedName>
</protein>
<comment type="function">
    <text evidence="2">Alpha toxins bind voltage-independently at site-3 of sodium channels (Nav) and inhibit the inactivation of the activated channels, thereby blocking neuronal transmission. This toxin binds, in vitro, to sodium channels and inhibits the inactivation of the activated channels. Seems not toxic to mice, crickets and sweet-water shrimps.</text>
</comment>
<comment type="subcellular location">
    <subcellularLocation>
        <location evidence="2">Secreted</location>
    </subcellularLocation>
</comment>
<comment type="tissue specificity">
    <text evidence="5">Expressed by the venom gland.</text>
</comment>
<comment type="domain">
    <text evidence="4">Has the structural arrangement of an alpha-helix connected to antiparallel beta-sheets by disulfide bonds (CS-alpha/beta).</text>
</comment>
<comment type="mass spectrometry" mass="7139.5" method="Unknown" evidence="2"/>
<comment type="similarity">
    <text evidence="4">Belongs to the long (4 C-C) scorpion toxin superfamily. Sodium channel inhibitor family. Beta subfamily.</text>
</comment>
<comment type="caution">
    <text evidence="4">This toxin sequence resembles the beta scorpion toxin class, although patch-clamp experiments shows the induction of supplementary slow inactivation of sodium channels, which means that it behaves like an alpha scorpion toxin.</text>
</comment>
<organism>
    <name type="scientific">Centruroides noxius</name>
    <name type="common">Mexican scorpion</name>
    <dbReference type="NCBI Taxonomy" id="6878"/>
    <lineage>
        <taxon>Eukaryota</taxon>
        <taxon>Metazoa</taxon>
        <taxon>Ecdysozoa</taxon>
        <taxon>Arthropoda</taxon>
        <taxon>Chelicerata</taxon>
        <taxon>Arachnida</taxon>
        <taxon>Scorpiones</taxon>
        <taxon>Buthida</taxon>
        <taxon>Buthoidea</taxon>
        <taxon>Buthidae</taxon>
        <taxon>Centruroides</taxon>
    </lineage>
</organism>
<keyword id="KW-0002">3D-structure</keyword>
<keyword id="KW-0903">Direct protein sequencing</keyword>
<keyword id="KW-1015">Disulfide bond</keyword>
<keyword id="KW-0872">Ion channel impairing toxin</keyword>
<keyword id="KW-0528">Neurotoxin</keyword>
<keyword id="KW-0964">Secreted</keyword>
<keyword id="KW-0800">Toxin</keyword>
<keyword id="KW-0738">Voltage-gated sodium channel impairing toxin</keyword>
<reference key="1">
    <citation type="journal article" date="2004" name="Eur. J. Biochem.">
        <title>NMR solution structure of Cn12, a novel peptide from the Mexican scorpion Centruroides noxius with a typical beta-toxin sequence but with alpha-like physiological activity.</title>
        <authorList>
            <person name="del Rio-Portilla F."/>
            <person name="Hernandez-Marin E."/>
            <person name="Pimienta G."/>
            <person name="Coronas F.V."/>
            <person name="Zamudio F.Z."/>
            <person name="Rodriguez de la Vega R.C."/>
            <person name="Wanke E."/>
            <person name="Possani L.D."/>
        </authorList>
    </citation>
    <scope>PROTEIN SEQUENCE</scope>
    <scope>FUNCTION</scope>
    <scope>MASS SPECTROMETRY</scope>
    <scope>STRUCTURE BY NMR</scope>
    <scope>DISULFIDE BONDS</scope>
    <scope>SUBCELLULAR LOCATION</scope>
    <source>
        <tissue>Venom</tissue>
    </source>
</reference>
<accession>P63019</accession>
<sequence length="67" mass="7148">RDGYPLASNGCKFGCSGLGENNPTCNHVCEKKAGSDYGYCYAWTCYCEHVAEGTVLWGDSGTGPCRS</sequence>
<evidence type="ECO:0000255" key="1">
    <source>
        <dbReference type="PROSITE-ProRule" id="PRU01210"/>
    </source>
</evidence>
<evidence type="ECO:0000269" key="2">
    <source>
    </source>
</evidence>
<evidence type="ECO:0000303" key="3">
    <source>
    </source>
</evidence>
<evidence type="ECO:0000305" key="4"/>
<evidence type="ECO:0000305" key="5">
    <source>
    </source>
</evidence>
<evidence type="ECO:0007744" key="6">
    <source>
        <dbReference type="PDB" id="1PE4"/>
    </source>
</evidence>
<evidence type="ECO:0007829" key="7">
    <source>
        <dbReference type="PDB" id="1PE4"/>
    </source>
</evidence>
<proteinExistence type="evidence at protein level"/>
<name>SCX12_CENNO</name>
<dbReference type="PDB" id="1PE4">
    <property type="method" value="NMR"/>
    <property type="chains" value="A=1-67"/>
</dbReference>
<dbReference type="PDBsum" id="1PE4"/>
<dbReference type="BMRB" id="P63019"/>
<dbReference type="SMR" id="P63019"/>
<dbReference type="TCDB" id="8.B.1.1.13">
    <property type="family name" value="the long (4c-c) scorpion toxin (l-st) superfamily"/>
</dbReference>
<dbReference type="EvolutionaryTrace" id="P63019"/>
<dbReference type="GO" id="GO:0005576">
    <property type="term" value="C:extracellular region"/>
    <property type="evidence" value="ECO:0007669"/>
    <property type="project" value="UniProtKB-SubCell"/>
</dbReference>
<dbReference type="GO" id="GO:0019871">
    <property type="term" value="F:sodium channel inhibitor activity"/>
    <property type="evidence" value="ECO:0007669"/>
    <property type="project" value="InterPro"/>
</dbReference>
<dbReference type="GO" id="GO:0090729">
    <property type="term" value="F:toxin activity"/>
    <property type="evidence" value="ECO:0007669"/>
    <property type="project" value="UniProtKB-KW"/>
</dbReference>
<dbReference type="CDD" id="cd23106">
    <property type="entry name" value="neurotoxins_LC_scorpion"/>
    <property type="match status" value="1"/>
</dbReference>
<dbReference type="Gene3D" id="3.30.30.10">
    <property type="entry name" value="Knottin, scorpion toxin-like"/>
    <property type="match status" value="1"/>
</dbReference>
<dbReference type="InterPro" id="IPR044062">
    <property type="entry name" value="LCN-type_CS_alpha_beta_dom"/>
</dbReference>
<dbReference type="InterPro" id="IPR036574">
    <property type="entry name" value="Scorpion_toxin-like_sf"/>
</dbReference>
<dbReference type="InterPro" id="IPR002061">
    <property type="entry name" value="Scorpion_toxinL/defensin"/>
</dbReference>
<dbReference type="Pfam" id="PF00537">
    <property type="entry name" value="Toxin_3"/>
    <property type="match status" value="1"/>
</dbReference>
<dbReference type="SUPFAM" id="SSF57095">
    <property type="entry name" value="Scorpion toxin-like"/>
    <property type="match status" value="1"/>
</dbReference>
<dbReference type="PROSITE" id="PS51863">
    <property type="entry name" value="LCN_CSAB"/>
    <property type="match status" value="1"/>
</dbReference>
<feature type="chain" id="PRO_0000066772" description="Alpha-toxin Cn12" evidence="2">
    <location>
        <begin position="1"/>
        <end position="67"/>
    </location>
</feature>
<feature type="domain" description="LCN-type CS-alpha/beta" evidence="1">
    <location>
        <begin position="1"/>
        <end position="66"/>
    </location>
</feature>
<feature type="disulfide bond" evidence="2 6">
    <location>
        <begin position="11"/>
        <end position="65"/>
    </location>
</feature>
<feature type="disulfide bond" evidence="2 6">
    <location>
        <begin position="15"/>
        <end position="40"/>
    </location>
</feature>
<feature type="disulfide bond" evidence="2 6">
    <location>
        <begin position="25"/>
        <end position="45"/>
    </location>
</feature>
<feature type="disulfide bond" evidence="2 6">
    <location>
        <begin position="29"/>
        <end position="47"/>
    </location>
</feature>
<feature type="strand" evidence="7">
    <location>
        <begin position="8"/>
        <end position="10"/>
    </location>
</feature>
<feature type="strand" evidence="7">
    <location>
        <begin position="12"/>
        <end position="14"/>
    </location>
</feature>
<feature type="helix" evidence="7">
    <location>
        <begin position="25"/>
        <end position="31"/>
    </location>
</feature>
<feature type="strand" evidence="7">
    <location>
        <begin position="41"/>
        <end position="44"/>
    </location>
</feature>
<feature type="strand" evidence="7">
    <location>
        <begin position="46"/>
        <end position="49"/>
    </location>
</feature>
<feature type="strand" evidence="7">
    <location>
        <begin position="51"/>
        <end position="53"/>
    </location>
</feature>
<feature type="strand" evidence="7">
    <location>
        <begin position="63"/>
        <end position="65"/>
    </location>
</feature>